<organism>
    <name type="scientific">Drosophila melanogaster</name>
    <name type="common">Fruit fly</name>
    <dbReference type="NCBI Taxonomy" id="7227"/>
    <lineage>
        <taxon>Eukaryota</taxon>
        <taxon>Metazoa</taxon>
        <taxon>Ecdysozoa</taxon>
        <taxon>Arthropoda</taxon>
        <taxon>Hexapoda</taxon>
        <taxon>Insecta</taxon>
        <taxon>Pterygota</taxon>
        <taxon>Neoptera</taxon>
        <taxon>Endopterygota</taxon>
        <taxon>Diptera</taxon>
        <taxon>Brachycera</taxon>
        <taxon>Muscomorpha</taxon>
        <taxon>Ephydroidea</taxon>
        <taxon>Drosophilidae</taxon>
        <taxon>Drosophila</taxon>
        <taxon>Sophophora</taxon>
    </lineage>
</organism>
<proteinExistence type="evidence at protein level"/>
<accession>Q9W0P8</accession>
<accession>Q5U1E1</accession>
<accession>Q8IRI9</accession>
<accession>Q961S0</accession>
<accession>Q9GYW6</accession>
<dbReference type="EMBL" id="AE014296">
    <property type="protein sequence ID" value="AAF47395.4"/>
    <property type="molecule type" value="Genomic_DNA"/>
</dbReference>
<dbReference type="EMBL" id="AE014296">
    <property type="protein sequence ID" value="AAN11445.2"/>
    <property type="molecule type" value="Genomic_DNA"/>
</dbReference>
<dbReference type="EMBL" id="BT015951">
    <property type="protein sequence ID" value="AAV36836.1"/>
    <property type="molecule type" value="mRNA"/>
</dbReference>
<dbReference type="EMBL" id="AF289997">
    <property type="protein sequence ID" value="AAG02462.1"/>
    <property type="status" value="ALT_INIT"/>
    <property type="molecule type" value="mRNA"/>
</dbReference>
<dbReference type="EMBL" id="AY050240">
    <property type="protein sequence ID" value="AAK84939.1"/>
    <property type="status" value="ALT_INIT"/>
    <property type="molecule type" value="mRNA"/>
</dbReference>
<dbReference type="RefSeq" id="NP_612041.2">
    <molecule id="Q9W0P8-1"/>
    <property type="nucleotide sequence ID" value="NM_138197.3"/>
</dbReference>
<dbReference type="RefSeq" id="NP_728534.2">
    <molecule id="Q9W0P8-3"/>
    <property type="nucleotide sequence ID" value="NM_167835.2"/>
</dbReference>
<dbReference type="SMR" id="Q9W0P8"/>
<dbReference type="BioGRID" id="63628">
    <property type="interactions" value="49"/>
</dbReference>
<dbReference type="ComplexPortal" id="CPX-2308">
    <property type="entry name" value="Core mediator complex"/>
</dbReference>
<dbReference type="DIP" id="DIP-60711N"/>
<dbReference type="FunCoup" id="Q9W0P8">
    <property type="interactions" value="2235"/>
</dbReference>
<dbReference type="IntAct" id="Q9W0P8">
    <property type="interactions" value="63"/>
</dbReference>
<dbReference type="STRING" id="7227.FBpp0311212"/>
<dbReference type="iPTMnet" id="Q9W0P8"/>
<dbReference type="PaxDb" id="7227-FBpp0072453"/>
<dbReference type="EnsemblMetazoa" id="FBtr0072554">
    <molecule id="Q9W0P8-1"/>
    <property type="protein sequence ID" value="FBpp0072453"/>
    <property type="gene ID" value="FBgn0035145"/>
</dbReference>
<dbReference type="EnsemblMetazoa" id="FBtr0344912">
    <molecule id="Q9W0P8-3"/>
    <property type="protein sequence ID" value="FBpp0311212"/>
    <property type="gene ID" value="FBgn0035145"/>
</dbReference>
<dbReference type="GeneID" id="38073"/>
<dbReference type="KEGG" id="dme:Dmel_CG12031"/>
<dbReference type="AGR" id="FB:FBgn0035145"/>
<dbReference type="CTD" id="9282"/>
<dbReference type="FlyBase" id="FBgn0035145">
    <property type="gene designation" value="MED14"/>
</dbReference>
<dbReference type="VEuPathDB" id="VectorBase:FBgn0035145"/>
<dbReference type="eggNOG" id="KOG1875">
    <property type="taxonomic scope" value="Eukaryota"/>
</dbReference>
<dbReference type="GeneTree" id="ENSGT00390000001021"/>
<dbReference type="HOGENOM" id="CLU_001928_0_0_1"/>
<dbReference type="InParanoid" id="Q9W0P8"/>
<dbReference type="OMA" id="KQPAYFI"/>
<dbReference type="OrthoDB" id="205099at2759"/>
<dbReference type="PhylomeDB" id="Q9W0P8"/>
<dbReference type="Reactome" id="R-DME-9841922">
    <property type="pathway name" value="MLL4 and MLL3 complexes regulate expression of PPARG target genes in adipogenesis and hepatic steatosis"/>
</dbReference>
<dbReference type="SignaLink" id="Q9W0P8"/>
<dbReference type="BioGRID-ORCS" id="38073">
    <property type="hits" value="0 hits in 1 CRISPR screen"/>
</dbReference>
<dbReference type="GenomeRNAi" id="38073"/>
<dbReference type="PRO" id="PR:Q9W0P8"/>
<dbReference type="Proteomes" id="UP000000803">
    <property type="component" value="Chromosome 3L"/>
</dbReference>
<dbReference type="Bgee" id="FBgn0035145">
    <property type="expression patterns" value="Expressed in adult oenocyte (Drosophila) in body wall and 99 other cell types or tissues"/>
</dbReference>
<dbReference type="ExpressionAtlas" id="Q9W0P8">
    <property type="expression patterns" value="baseline and differential"/>
</dbReference>
<dbReference type="GO" id="GO:0070847">
    <property type="term" value="C:core mediator complex"/>
    <property type="evidence" value="ECO:0000353"/>
    <property type="project" value="FlyBase"/>
</dbReference>
<dbReference type="GO" id="GO:0016592">
    <property type="term" value="C:mediator complex"/>
    <property type="evidence" value="ECO:0000315"/>
    <property type="project" value="UniProtKB"/>
</dbReference>
<dbReference type="GO" id="GO:0003712">
    <property type="term" value="F:transcription coregulator activity"/>
    <property type="evidence" value="ECO:0000315"/>
    <property type="project" value="UniProtKB"/>
</dbReference>
<dbReference type="GO" id="GO:0006357">
    <property type="term" value="P:regulation of transcription by RNA polymerase II"/>
    <property type="evidence" value="ECO:0000315"/>
    <property type="project" value="UniProtKB"/>
</dbReference>
<dbReference type="GO" id="GO:0060260">
    <property type="term" value="P:regulation of transcription initiation by RNA polymerase II"/>
    <property type="evidence" value="ECO:0000250"/>
    <property type="project" value="FlyBase"/>
</dbReference>
<dbReference type="InterPro" id="IPR056877">
    <property type="entry name" value="Med14_C"/>
</dbReference>
<dbReference type="InterPro" id="IPR055122">
    <property type="entry name" value="Med14_N"/>
</dbReference>
<dbReference type="InterPro" id="IPR055113">
    <property type="entry name" value="Med14_RM2"/>
</dbReference>
<dbReference type="InterPro" id="IPR055114">
    <property type="entry name" value="Med14_RM6"/>
</dbReference>
<dbReference type="InterPro" id="IPR055107">
    <property type="entry name" value="Med14_RM8"/>
</dbReference>
<dbReference type="InterPro" id="IPR013947">
    <property type="entry name" value="Mediator_Med14"/>
</dbReference>
<dbReference type="InterPro" id="IPR056879">
    <property type="entry name" value="RM3_Med14"/>
</dbReference>
<dbReference type="InterPro" id="IPR056878">
    <property type="entry name" value="RM5_Med14"/>
</dbReference>
<dbReference type="PANTHER" id="PTHR12809">
    <property type="entry name" value="MEDIATOR COMPLEX SUBUNIT"/>
    <property type="match status" value="1"/>
</dbReference>
<dbReference type="PANTHER" id="PTHR12809:SF2">
    <property type="entry name" value="MEDIATOR OF RNA POLYMERASE II TRANSCRIPTION SUBUNIT 14"/>
    <property type="match status" value="1"/>
</dbReference>
<dbReference type="Pfam" id="PF08638">
    <property type="entry name" value="Med14"/>
    <property type="match status" value="1"/>
</dbReference>
<dbReference type="Pfam" id="PF25069">
    <property type="entry name" value="Med14_C"/>
    <property type="match status" value="1"/>
</dbReference>
<dbReference type="Pfam" id="PF22981">
    <property type="entry name" value="RM2_Med14"/>
    <property type="match status" value="1"/>
</dbReference>
<dbReference type="Pfam" id="PF25065">
    <property type="entry name" value="RM3_Med14"/>
    <property type="match status" value="1"/>
</dbReference>
<dbReference type="Pfam" id="PF25067">
    <property type="entry name" value="RM5_Med14"/>
    <property type="match status" value="2"/>
</dbReference>
<dbReference type="Pfam" id="PF22984">
    <property type="entry name" value="RM6_Med14"/>
    <property type="match status" value="1"/>
</dbReference>
<dbReference type="Pfam" id="PF22983">
    <property type="entry name" value="RM8_Med14"/>
    <property type="match status" value="1"/>
</dbReference>
<sequence>MAPTPLPLEQMPGVGGGGGGYLPAAQEGGPRINTMSMSVLIDFIIQRTYHELTVLAELLPRKTDMERKVEIYNYAARTRHLFTRLNALVKWGNSVSKVDKSSQIMSFLDKQNMLFVETADMLARMSRETLVRARLPNFHIPAAVEVLTTGTYNRLPTCIRERIVPADAITPAEKRQTLLRLNQVIQHRLVTGKLLPQMREFRIRNGRVTFEVKHEFSVSLTVMGDNPTVPWRLLDIDVLVEDKETGDGKSLVHPLQVNYIHQLIQARLVENPNALSEVYNCLHYFCQSLQLEVLYTQTLRLNYERLDDNNITVEEYVPGVKLTVSYWRDLKSELGYRLTVQSDPSEIGRPLAVVHVPSLGAKESAEVADRAVRSEHLSMERLIVHTVYIRSVSRLSDLKLEFQAFLKDVDFNLQGTPAILTVPVLSPCLRAEQIHITIDTHTGMFRCHVPKHLDCPIMEEMQDCLNGDRSKLPALLSELRFWITHRRCDKTLQHLPATATETLPFLVQPDQEILQPGRHKIYVKLHRHPNIVLVVQLKEKTTMPNEMEYTFHLGFVAYQKDELDVIDDSAMQLVSIVAQPHSDIPKCYTKLMRLIEFDTFVATHGPGTEVDAEVSPHKRKSNGDLLAPPAKQQKTIFPAYFIPELAHVVAMCDEKIPFMNLAQTLSKHNIPHSGLQVEANATSLVLKILALPQPGKTTFATQQQQQQGAPAVAGENKPSGTSGLPKIDSHVWDDLMRRVLSISIRSQTNKNSQVRIWVVEFVFYSTPLQSSHPKEQGSRRTVYLTYEQANYDFSKTVEDLLNDWSKIVYLYTLVYDFAEQLLNKRLSLCDMLVVKSYSYMNLLLGYGPKKEVSCNIYWSVQSHGFRLTFVGGMSAVNGHSMMRDQLAQHLNQQHSITQIAQILHETYNPLSSIAKLPVLPFLGIPRPQVPVLSFCVLAQSPCLIRLTYQAVYCLELRFRANRLVSIRDGASSRFERNVVEEFTPIQGLKAFLSKYVDESAVYRGRASHEDDNPLSPMGMEDNFGGPSSVAGVSAGGSSPFLGTGMRGPQSPRDSGLRFPAPHTPPSSSNPHTPASPHPSAGAGGGSGPQGHGNFNLTSPPAPHMPHPSPSGLMPSSPLNPQPSPHMVHSPGPNTLYMQSHQDSPFTAMSPANNNWPGSPSMPRPSPRPGQSPDHKSTGGGAGVAGGTDRGGSRGTLNRPWAGAVPTLLTHEALETLCRPSPYPNKDINVPDMSPLERFLGCVYMRRQLHRNIQSEETLTALNSTEPGVVLFKVDGLQCQVVLNQMHMQTLHLKVSQLPPMPDKHPPPFQLSQDDLLVIEQYFDTRVAAPPYRPNSLHSICRLLNLPAQVLKDFVQIMRLDLKPELGGDQLKWTVQICLRMPPSAVPIVPSGNACVVMGRMKILFFLQITRIPYGAVIGVGKDWKDSPSLVLPIVYDIQTNVTQLAERTGQVISPTMTAASTLLRRFAEFNAQQNQCTLFPAITDLLTNLQLAAEMPQPPPNQSIGPPVGVGVGVGSSPNPMMPMQQLPQQVGPQGPVGPGGYPQMGPNPGGPQ</sequence>
<comment type="function">
    <text evidence="2 3">Component of the Mediator complex, a coactivator involved in the regulated transcription of nearly all RNA polymerase II-dependent genes. Mediator functions as a bridge to convey information from gene-specific regulatory proteins to the basal RNA polymerase II transcription machinery. Mediator is recruited to promoters by direct interactions with regulatory proteins and serves as a scaffold for the assembly of a functional pre-initiation complex with RNA polymerase II and the general transcription factors. Required for activated transcription of the MtnA, MtnB and MtnD genes.</text>
</comment>
<comment type="subunit">
    <text evidence="2">Component of the Mediator complex, which may include CDK8, MED4, MED6, MED11, MED14, MED17, MED18, MED20, MED21, MED22, MED27, MED28, MED30 and MED31.</text>
</comment>
<comment type="subcellular location">
    <subcellularLocation>
        <location evidence="5">Nucleus</location>
    </subcellularLocation>
</comment>
<comment type="alternative products">
    <event type="alternative splicing"/>
    <isoform>
        <id>Q9W0P8-1</id>
        <name>1</name>
        <name evidence="6">A</name>
        <sequence type="displayed"/>
    </isoform>
    <isoform>
        <id>Q9W0P8-3</id>
        <name evidence="5">2</name>
        <name evidence="6">C</name>
        <sequence type="described" ref="VSP_058119"/>
    </isoform>
</comment>
<comment type="similarity">
    <text evidence="5">Belongs to the Mediator complex subunit 14 family.</text>
</comment>
<comment type="sequence caution" evidence="5">
    <conflict type="erroneous initiation">
        <sequence resource="EMBL-CDS" id="AAG02462"/>
    </conflict>
    <text>Truncated N-terminus.</text>
</comment>
<comment type="sequence caution" evidence="5">
    <conflict type="erroneous initiation">
        <sequence resource="EMBL-CDS" id="AAK84939"/>
    </conflict>
    <text>Truncated N-terminus.</text>
</comment>
<evidence type="ECO:0000256" key="1">
    <source>
        <dbReference type="SAM" id="MobiDB-lite"/>
    </source>
</evidence>
<evidence type="ECO:0000269" key="2">
    <source>
    </source>
</evidence>
<evidence type="ECO:0000269" key="3">
    <source>
    </source>
</evidence>
<evidence type="ECO:0000269" key="4">
    <source>
    </source>
</evidence>
<evidence type="ECO:0000305" key="5"/>
<evidence type="ECO:0000312" key="6">
    <source>
        <dbReference type="FlyBase" id="FBgn0035145"/>
    </source>
</evidence>
<name>MED14_DROME</name>
<keyword id="KW-0010">Activator</keyword>
<keyword id="KW-0025">Alternative splicing</keyword>
<keyword id="KW-0539">Nucleus</keyword>
<keyword id="KW-0597">Phosphoprotein</keyword>
<keyword id="KW-1185">Reference proteome</keyword>
<keyword id="KW-0677">Repeat</keyword>
<keyword id="KW-0804">Transcription</keyword>
<keyword id="KW-0805">Transcription regulation</keyword>
<feature type="chain" id="PRO_0000304588" description="Mediator of RNA polymerase II transcription subunit 14">
    <location>
        <begin position="1"/>
        <end position="1553"/>
    </location>
</feature>
<feature type="region of interest" description="Disordered" evidence="1">
    <location>
        <begin position="699"/>
        <end position="723"/>
    </location>
</feature>
<feature type="region of interest" description="Disordered" evidence="1">
    <location>
        <begin position="1006"/>
        <end position="1199"/>
    </location>
</feature>
<feature type="region of interest" description="Disordered" evidence="1">
    <location>
        <begin position="1513"/>
        <end position="1553"/>
    </location>
</feature>
<feature type="short sequence motif" description="LXXLL motif 1">
    <location>
        <begin position="55"/>
        <end position="59"/>
    </location>
</feature>
<feature type="short sequence motif" description="LXXLL motif 2">
    <location>
        <begin position="472"/>
        <end position="476"/>
    </location>
</feature>
<feature type="compositionally biased region" description="Low complexity" evidence="1">
    <location>
        <begin position="1024"/>
        <end position="1039"/>
    </location>
</feature>
<feature type="compositionally biased region" description="Low complexity" evidence="1">
    <location>
        <begin position="1065"/>
        <end position="1080"/>
    </location>
</feature>
<feature type="compositionally biased region" description="Gly residues" evidence="1">
    <location>
        <begin position="1081"/>
        <end position="1090"/>
    </location>
</feature>
<feature type="compositionally biased region" description="Pro residues" evidence="1">
    <location>
        <begin position="1099"/>
        <end position="1108"/>
    </location>
</feature>
<feature type="compositionally biased region" description="Polar residues" evidence="1">
    <location>
        <begin position="1131"/>
        <end position="1155"/>
    </location>
</feature>
<feature type="compositionally biased region" description="Pro residues" evidence="1">
    <location>
        <begin position="1159"/>
        <end position="1169"/>
    </location>
</feature>
<feature type="compositionally biased region" description="Gly residues" evidence="1">
    <location>
        <begin position="1177"/>
        <end position="1193"/>
    </location>
</feature>
<feature type="compositionally biased region" description="Low complexity" evidence="1">
    <location>
        <begin position="1515"/>
        <end position="1534"/>
    </location>
</feature>
<feature type="modified residue" description="Phosphoserine" evidence="4">
    <location>
        <position position="615"/>
    </location>
</feature>
<feature type="modified residue" description="Phosphoserine" evidence="4">
    <location>
        <position position="1015"/>
    </location>
</feature>
<feature type="splice variant" id="VSP_058119" description="In isoform 2." evidence="5">
    <original>D</original>
    <variation>DCE</variation>
    <location>
        <position position="410"/>
    </location>
</feature>
<feature type="sequence conflict" description="In Ref. 5; AAK84939 and 3; AAV36836." evidence="5" ref="5 3">
    <original>T</original>
    <variation>N</variation>
    <location>
        <position position="698"/>
    </location>
</feature>
<feature type="sequence conflict" description="In Ref. 5; AAK84939 and 3; AAV36836." evidence="5" ref="5 3">
    <original>L</original>
    <variation>Q</variation>
    <location>
        <position position="822"/>
    </location>
</feature>
<gene>
    <name type="primary">MED14</name>
    <name type="synonym">Trap170</name>
    <name type="ORF">CG12031</name>
</gene>
<reference key="1">
    <citation type="journal article" date="2000" name="Science">
        <title>The genome sequence of Drosophila melanogaster.</title>
        <authorList>
            <person name="Adams M.D."/>
            <person name="Celniker S.E."/>
            <person name="Holt R.A."/>
            <person name="Evans C.A."/>
            <person name="Gocayne J.D."/>
            <person name="Amanatides P.G."/>
            <person name="Scherer S.E."/>
            <person name="Li P.W."/>
            <person name="Hoskins R.A."/>
            <person name="Galle R.F."/>
            <person name="George R.A."/>
            <person name="Lewis S.E."/>
            <person name="Richards S."/>
            <person name="Ashburner M."/>
            <person name="Henderson S.N."/>
            <person name="Sutton G.G."/>
            <person name="Wortman J.R."/>
            <person name="Yandell M.D."/>
            <person name="Zhang Q."/>
            <person name="Chen L.X."/>
            <person name="Brandon R.C."/>
            <person name="Rogers Y.-H.C."/>
            <person name="Blazej R.G."/>
            <person name="Champe M."/>
            <person name="Pfeiffer B.D."/>
            <person name="Wan K.H."/>
            <person name="Doyle C."/>
            <person name="Baxter E.G."/>
            <person name="Helt G."/>
            <person name="Nelson C.R."/>
            <person name="Miklos G.L.G."/>
            <person name="Abril J.F."/>
            <person name="Agbayani A."/>
            <person name="An H.-J."/>
            <person name="Andrews-Pfannkoch C."/>
            <person name="Baldwin D."/>
            <person name="Ballew R.M."/>
            <person name="Basu A."/>
            <person name="Baxendale J."/>
            <person name="Bayraktaroglu L."/>
            <person name="Beasley E.M."/>
            <person name="Beeson K.Y."/>
            <person name="Benos P.V."/>
            <person name="Berman B.P."/>
            <person name="Bhandari D."/>
            <person name="Bolshakov S."/>
            <person name="Borkova D."/>
            <person name="Botchan M.R."/>
            <person name="Bouck J."/>
            <person name="Brokstein P."/>
            <person name="Brottier P."/>
            <person name="Burtis K.C."/>
            <person name="Busam D.A."/>
            <person name="Butler H."/>
            <person name="Cadieu E."/>
            <person name="Center A."/>
            <person name="Chandra I."/>
            <person name="Cherry J.M."/>
            <person name="Cawley S."/>
            <person name="Dahlke C."/>
            <person name="Davenport L.B."/>
            <person name="Davies P."/>
            <person name="de Pablos B."/>
            <person name="Delcher A."/>
            <person name="Deng Z."/>
            <person name="Mays A.D."/>
            <person name="Dew I."/>
            <person name="Dietz S.M."/>
            <person name="Dodson K."/>
            <person name="Doup L.E."/>
            <person name="Downes M."/>
            <person name="Dugan-Rocha S."/>
            <person name="Dunkov B.C."/>
            <person name="Dunn P."/>
            <person name="Durbin K.J."/>
            <person name="Evangelista C.C."/>
            <person name="Ferraz C."/>
            <person name="Ferriera S."/>
            <person name="Fleischmann W."/>
            <person name="Fosler C."/>
            <person name="Gabrielian A.E."/>
            <person name="Garg N.S."/>
            <person name="Gelbart W.M."/>
            <person name="Glasser K."/>
            <person name="Glodek A."/>
            <person name="Gong F."/>
            <person name="Gorrell J.H."/>
            <person name="Gu Z."/>
            <person name="Guan P."/>
            <person name="Harris M."/>
            <person name="Harris N.L."/>
            <person name="Harvey D.A."/>
            <person name="Heiman T.J."/>
            <person name="Hernandez J.R."/>
            <person name="Houck J."/>
            <person name="Hostin D."/>
            <person name="Houston K.A."/>
            <person name="Howland T.J."/>
            <person name="Wei M.-H."/>
            <person name="Ibegwam C."/>
            <person name="Jalali M."/>
            <person name="Kalush F."/>
            <person name="Karpen G.H."/>
            <person name="Ke Z."/>
            <person name="Kennison J.A."/>
            <person name="Ketchum K.A."/>
            <person name="Kimmel B.E."/>
            <person name="Kodira C.D."/>
            <person name="Kraft C.L."/>
            <person name="Kravitz S."/>
            <person name="Kulp D."/>
            <person name="Lai Z."/>
            <person name="Lasko P."/>
            <person name="Lei Y."/>
            <person name="Levitsky A.A."/>
            <person name="Li J.H."/>
            <person name="Li Z."/>
            <person name="Liang Y."/>
            <person name="Lin X."/>
            <person name="Liu X."/>
            <person name="Mattei B."/>
            <person name="McIntosh T.C."/>
            <person name="McLeod M.P."/>
            <person name="McPherson D."/>
            <person name="Merkulov G."/>
            <person name="Milshina N.V."/>
            <person name="Mobarry C."/>
            <person name="Morris J."/>
            <person name="Moshrefi A."/>
            <person name="Mount S.M."/>
            <person name="Moy M."/>
            <person name="Murphy B."/>
            <person name="Murphy L."/>
            <person name="Muzny D.M."/>
            <person name="Nelson D.L."/>
            <person name="Nelson D.R."/>
            <person name="Nelson K.A."/>
            <person name="Nixon K."/>
            <person name="Nusskern D.R."/>
            <person name="Pacleb J.M."/>
            <person name="Palazzolo M."/>
            <person name="Pittman G.S."/>
            <person name="Pan S."/>
            <person name="Pollard J."/>
            <person name="Puri V."/>
            <person name="Reese M.G."/>
            <person name="Reinert K."/>
            <person name="Remington K."/>
            <person name="Saunders R.D.C."/>
            <person name="Scheeler F."/>
            <person name="Shen H."/>
            <person name="Shue B.C."/>
            <person name="Siden-Kiamos I."/>
            <person name="Simpson M."/>
            <person name="Skupski M.P."/>
            <person name="Smith T.J."/>
            <person name="Spier E."/>
            <person name="Spradling A.C."/>
            <person name="Stapleton M."/>
            <person name="Strong R."/>
            <person name="Sun E."/>
            <person name="Svirskas R."/>
            <person name="Tector C."/>
            <person name="Turner R."/>
            <person name="Venter E."/>
            <person name="Wang A.H."/>
            <person name="Wang X."/>
            <person name="Wang Z.-Y."/>
            <person name="Wassarman D.A."/>
            <person name="Weinstock G.M."/>
            <person name="Weissenbach J."/>
            <person name="Williams S.M."/>
            <person name="Woodage T."/>
            <person name="Worley K.C."/>
            <person name="Wu D."/>
            <person name="Yang S."/>
            <person name="Yao Q.A."/>
            <person name="Ye J."/>
            <person name="Yeh R.-F."/>
            <person name="Zaveri J.S."/>
            <person name="Zhan M."/>
            <person name="Zhang G."/>
            <person name="Zhao Q."/>
            <person name="Zheng L."/>
            <person name="Zheng X.H."/>
            <person name="Zhong F.N."/>
            <person name="Zhong W."/>
            <person name="Zhou X."/>
            <person name="Zhu S.C."/>
            <person name="Zhu X."/>
            <person name="Smith H.O."/>
            <person name="Gibbs R.A."/>
            <person name="Myers E.W."/>
            <person name="Rubin G.M."/>
            <person name="Venter J.C."/>
        </authorList>
    </citation>
    <scope>NUCLEOTIDE SEQUENCE [LARGE SCALE GENOMIC DNA]</scope>
    <source>
        <strain>Berkeley</strain>
    </source>
</reference>
<reference key="2">
    <citation type="journal article" date="2002" name="Genome Biol.">
        <title>Annotation of the Drosophila melanogaster euchromatic genome: a systematic review.</title>
        <authorList>
            <person name="Misra S."/>
            <person name="Crosby M.A."/>
            <person name="Mungall C.J."/>
            <person name="Matthews B.B."/>
            <person name="Campbell K.S."/>
            <person name="Hradecky P."/>
            <person name="Huang Y."/>
            <person name="Kaminker J.S."/>
            <person name="Millburn G.H."/>
            <person name="Prochnik S.E."/>
            <person name="Smith C.D."/>
            <person name="Tupy J.L."/>
            <person name="Whitfield E.J."/>
            <person name="Bayraktaroglu L."/>
            <person name="Berman B.P."/>
            <person name="Bettencourt B.R."/>
            <person name="Celniker S.E."/>
            <person name="de Grey A.D.N.J."/>
            <person name="Drysdale R.A."/>
            <person name="Harris N.L."/>
            <person name="Richter J."/>
            <person name="Russo S."/>
            <person name="Schroeder A.J."/>
            <person name="Shu S.Q."/>
            <person name="Stapleton M."/>
            <person name="Yamada C."/>
            <person name="Ashburner M."/>
            <person name="Gelbart W.M."/>
            <person name="Rubin G.M."/>
            <person name="Lewis S.E."/>
        </authorList>
    </citation>
    <scope>GENOME REANNOTATION</scope>
    <scope>ALTERNATIVE SPLICING</scope>
    <source>
        <strain>Berkeley</strain>
    </source>
</reference>
<reference key="3">
    <citation type="submission" date="2004-10" db="EMBL/GenBank/DDBJ databases">
        <authorList>
            <person name="Stapleton M."/>
            <person name="Carlson J.W."/>
            <person name="Chavez C."/>
            <person name="Frise E."/>
            <person name="George R.A."/>
            <person name="Pacleb J.M."/>
            <person name="Park S."/>
            <person name="Wan K.H."/>
            <person name="Yu C."/>
            <person name="Rubin G.M."/>
            <person name="Celniker S.E."/>
        </authorList>
    </citation>
    <scope>NUCLEOTIDE SEQUENCE [LARGE SCALE MRNA] (ISOFORM 1)</scope>
    <source>
        <strain>Berkeley</strain>
        <tissue>Embryo</tissue>
    </source>
</reference>
<reference key="4">
    <citation type="submission" date="2000-07" db="EMBL/GenBank/DDBJ databases">
        <title>Transcriptional coactivators in Drosophila.</title>
        <authorList>
            <person name="Southworth J.W."/>
            <person name="Kennison J.A."/>
        </authorList>
    </citation>
    <scope>NUCLEOTIDE SEQUENCE [MRNA] OF 214-1553 (ISOFORM 1)</scope>
</reference>
<reference key="5">
    <citation type="journal article" date="2002" name="Genome Biol.">
        <title>A Drosophila full-length cDNA resource.</title>
        <authorList>
            <person name="Stapleton M."/>
            <person name="Carlson J.W."/>
            <person name="Brokstein P."/>
            <person name="Yu C."/>
            <person name="Champe M."/>
            <person name="George R.A."/>
            <person name="Guarin H."/>
            <person name="Kronmiller B."/>
            <person name="Pacleb J.M."/>
            <person name="Park S."/>
            <person name="Wan K.H."/>
            <person name="Rubin G.M."/>
            <person name="Celniker S.E."/>
        </authorList>
    </citation>
    <scope>NUCLEOTIDE SEQUENCE [LARGE SCALE MRNA] OF 214-1553 (ISOFORM 1)</scope>
    <source>
        <strain>Berkeley</strain>
        <tissue>Embryo</tissue>
    </source>
</reference>
<reference key="6">
    <citation type="journal article" date="2001" name="Mol. Cell. Biol.">
        <title>Drosophila Mediator complex is broadly utilized by diverse gene-specific transcription factors at different types of core promoters.</title>
        <authorList>
            <person name="Park J.M."/>
            <person name="Gim B.S."/>
            <person name="Kim J.M."/>
            <person name="Yoon J.H."/>
            <person name="Kim H.-S."/>
            <person name="Kang J.-G."/>
            <person name="Kim Y.-J."/>
        </authorList>
    </citation>
    <scope>FUNCTION OF THE MEDIATOR COMPLEX</scope>
    <scope>IDENTIFICATION IN A COMPLEX WITH CDK8; MED6; MED14; MED17; MED18; MED20; MED21 AND MED31</scope>
</reference>
<reference key="7">
    <citation type="journal article" date="2006" name="Genes Dev.">
        <title>Coactivator cross-talk specifies transcriptional output.</title>
        <authorList>
            <person name="Marr M.T. II"/>
            <person name="Isogai Y."/>
            <person name="Wright K.J."/>
            <person name="Tjian R."/>
        </authorList>
    </citation>
    <scope>FUNCTION</scope>
</reference>
<reference key="8">
    <citation type="journal article" date="2008" name="J. Proteome Res.">
        <title>Phosphoproteome analysis of Drosophila melanogaster embryos.</title>
        <authorList>
            <person name="Zhai B."/>
            <person name="Villen J."/>
            <person name="Beausoleil S.A."/>
            <person name="Mintseris J."/>
            <person name="Gygi S.P."/>
        </authorList>
    </citation>
    <scope>PHOSPHORYLATION [LARGE SCALE ANALYSIS] AT SER-615 AND SER-1015</scope>
    <scope>IDENTIFICATION BY MASS SPECTROMETRY</scope>
    <source>
        <tissue>Embryo</tissue>
    </source>
</reference>
<protein>
    <recommendedName>
        <fullName>Mediator of RNA polymerase II transcription subunit 14</fullName>
    </recommendedName>
    <alternativeName>
        <fullName>Mediator complex subunit 14</fullName>
    </alternativeName>
    <alternativeName>
        <fullName>dRGR1</fullName>
    </alternativeName>
</protein>